<evidence type="ECO:0000250" key="1">
    <source>
        <dbReference type="UniProtKB" id="P00327"/>
    </source>
</evidence>
<evidence type="ECO:0000250" key="2">
    <source>
        <dbReference type="UniProtKB" id="P06525"/>
    </source>
</evidence>
<evidence type="ECO:0000305" key="3"/>
<reference key="1">
    <citation type="journal article" date="2000" name="Nature">
        <title>Sequence and analysis of chromosome 1 of the plant Arabidopsis thaliana.</title>
        <authorList>
            <person name="Theologis A."/>
            <person name="Ecker J.R."/>
            <person name="Palm C.J."/>
            <person name="Federspiel N.A."/>
            <person name="Kaul S."/>
            <person name="White O."/>
            <person name="Alonso J."/>
            <person name="Altafi H."/>
            <person name="Araujo R."/>
            <person name="Bowman C.L."/>
            <person name="Brooks S.Y."/>
            <person name="Buehler E."/>
            <person name="Chan A."/>
            <person name="Chao Q."/>
            <person name="Chen H."/>
            <person name="Cheuk R.F."/>
            <person name="Chin C.W."/>
            <person name="Chung M.K."/>
            <person name="Conn L."/>
            <person name="Conway A.B."/>
            <person name="Conway A.R."/>
            <person name="Creasy T.H."/>
            <person name="Dewar K."/>
            <person name="Dunn P."/>
            <person name="Etgu P."/>
            <person name="Feldblyum T.V."/>
            <person name="Feng J.-D."/>
            <person name="Fong B."/>
            <person name="Fujii C.Y."/>
            <person name="Gill J.E."/>
            <person name="Goldsmith A.D."/>
            <person name="Haas B."/>
            <person name="Hansen N.F."/>
            <person name="Hughes B."/>
            <person name="Huizar L."/>
            <person name="Hunter J.L."/>
            <person name="Jenkins J."/>
            <person name="Johnson-Hopson C."/>
            <person name="Khan S."/>
            <person name="Khaykin E."/>
            <person name="Kim C.J."/>
            <person name="Koo H.L."/>
            <person name="Kremenetskaia I."/>
            <person name="Kurtz D.B."/>
            <person name="Kwan A."/>
            <person name="Lam B."/>
            <person name="Langin-Hooper S."/>
            <person name="Lee A."/>
            <person name="Lee J.M."/>
            <person name="Lenz C.A."/>
            <person name="Li J.H."/>
            <person name="Li Y.-P."/>
            <person name="Lin X."/>
            <person name="Liu S.X."/>
            <person name="Liu Z.A."/>
            <person name="Luros J.S."/>
            <person name="Maiti R."/>
            <person name="Marziali A."/>
            <person name="Militscher J."/>
            <person name="Miranda M."/>
            <person name="Nguyen M."/>
            <person name="Nierman W.C."/>
            <person name="Osborne B.I."/>
            <person name="Pai G."/>
            <person name="Peterson J."/>
            <person name="Pham P.K."/>
            <person name="Rizzo M."/>
            <person name="Rooney T."/>
            <person name="Rowley D."/>
            <person name="Sakano H."/>
            <person name="Salzberg S.L."/>
            <person name="Schwartz J.R."/>
            <person name="Shinn P."/>
            <person name="Southwick A.M."/>
            <person name="Sun H."/>
            <person name="Tallon L.J."/>
            <person name="Tambunga G."/>
            <person name="Toriumi M.J."/>
            <person name="Town C.D."/>
            <person name="Utterback T."/>
            <person name="Van Aken S."/>
            <person name="Vaysberg M."/>
            <person name="Vysotskaia V.S."/>
            <person name="Walker M."/>
            <person name="Wu D."/>
            <person name="Yu G."/>
            <person name="Fraser C.M."/>
            <person name="Venter J.C."/>
            <person name="Davis R.W."/>
        </authorList>
    </citation>
    <scope>NUCLEOTIDE SEQUENCE [LARGE SCALE GENOMIC DNA]</scope>
    <source>
        <strain>cv. Columbia</strain>
    </source>
</reference>
<reference key="2">
    <citation type="journal article" date="2017" name="Plant J.">
        <title>Araport11: a complete reannotation of the Arabidopsis thaliana reference genome.</title>
        <authorList>
            <person name="Cheng C.Y."/>
            <person name="Krishnakumar V."/>
            <person name="Chan A.P."/>
            <person name="Thibaud-Nissen F."/>
            <person name="Schobel S."/>
            <person name="Town C.D."/>
        </authorList>
    </citation>
    <scope>GENOME REANNOTATION</scope>
    <source>
        <strain>cv. Columbia</strain>
    </source>
</reference>
<reference key="3">
    <citation type="submission" date="2004-09" db="EMBL/GenBank/DDBJ databases">
        <title>Arabidopsis ORF clones.</title>
        <authorList>
            <person name="Kim C.J."/>
            <person name="Chen H."/>
            <person name="Cheuk R.F."/>
            <person name="Shinn P."/>
            <person name="Ecker J.R."/>
        </authorList>
    </citation>
    <scope>NUCLEOTIDE SEQUENCE [LARGE SCALE MRNA]</scope>
    <source>
        <strain>cv. Columbia</strain>
    </source>
</reference>
<dbReference type="EC" id="1.1.1.1" evidence="2"/>
<dbReference type="EMBL" id="AC006551">
    <property type="protein sequence ID" value="AAF18533.1"/>
    <property type="molecule type" value="Genomic_DNA"/>
</dbReference>
<dbReference type="EMBL" id="CP002684">
    <property type="protein sequence ID" value="AEE30242.1"/>
    <property type="molecule type" value="Genomic_DNA"/>
</dbReference>
<dbReference type="EMBL" id="BT015046">
    <property type="protein sequence ID" value="AAT71918.1"/>
    <property type="molecule type" value="mRNA"/>
</dbReference>
<dbReference type="EMBL" id="BT015637">
    <property type="protein sequence ID" value="AAU15136.1"/>
    <property type="molecule type" value="mRNA"/>
</dbReference>
<dbReference type="PIR" id="E86357">
    <property type="entry name" value="E86357"/>
</dbReference>
<dbReference type="RefSeq" id="NP_173660.1">
    <property type="nucleotide sequence ID" value="NM_102093.5"/>
</dbReference>
<dbReference type="SMR" id="Q9SK87"/>
<dbReference type="BioGRID" id="24089">
    <property type="interactions" value="3"/>
</dbReference>
<dbReference type="FunCoup" id="Q9SK87">
    <property type="interactions" value="323"/>
</dbReference>
<dbReference type="IntAct" id="Q9SK87">
    <property type="interactions" value="1"/>
</dbReference>
<dbReference type="STRING" id="3702.Q9SK87"/>
<dbReference type="PaxDb" id="3702-AT1G22440.1"/>
<dbReference type="ProteomicsDB" id="244753"/>
<dbReference type="EnsemblPlants" id="AT1G22440.1">
    <property type="protein sequence ID" value="AT1G22440.1"/>
    <property type="gene ID" value="AT1G22440"/>
</dbReference>
<dbReference type="GeneID" id="838850"/>
<dbReference type="Gramene" id="AT1G22440.1">
    <property type="protein sequence ID" value="AT1G22440.1"/>
    <property type="gene ID" value="AT1G22440"/>
</dbReference>
<dbReference type="KEGG" id="ath:AT1G22440"/>
<dbReference type="Araport" id="AT1G22440"/>
<dbReference type="TAIR" id="AT1G22440"/>
<dbReference type="eggNOG" id="KOG0022">
    <property type="taxonomic scope" value="Eukaryota"/>
</dbReference>
<dbReference type="HOGENOM" id="CLU_026673_14_0_1"/>
<dbReference type="InParanoid" id="Q9SK87"/>
<dbReference type="OMA" id="HICEGDA"/>
<dbReference type="PhylomeDB" id="Q9SK87"/>
<dbReference type="BioCyc" id="ARA:AT1G22440-MONOMER"/>
<dbReference type="PRO" id="PR:Q9SK87"/>
<dbReference type="Proteomes" id="UP000006548">
    <property type="component" value="Chromosome 1"/>
</dbReference>
<dbReference type="ExpressionAtlas" id="Q9SK87">
    <property type="expression patterns" value="baseline and differential"/>
</dbReference>
<dbReference type="GO" id="GO:0005737">
    <property type="term" value="C:cytoplasm"/>
    <property type="evidence" value="ECO:0007669"/>
    <property type="project" value="UniProtKB-SubCell"/>
</dbReference>
<dbReference type="GO" id="GO:0004022">
    <property type="term" value="F:alcohol dehydrogenase (NAD+) activity"/>
    <property type="evidence" value="ECO:0007669"/>
    <property type="project" value="UniProtKB-EC"/>
</dbReference>
<dbReference type="GO" id="GO:0008270">
    <property type="term" value="F:zinc ion binding"/>
    <property type="evidence" value="ECO:0007669"/>
    <property type="project" value="InterPro"/>
</dbReference>
<dbReference type="CDD" id="cd08301">
    <property type="entry name" value="alcohol_DH_plants"/>
    <property type="match status" value="1"/>
</dbReference>
<dbReference type="FunFam" id="3.90.180.10:FF:000007">
    <property type="entry name" value="Alcohol dehydrogenase 6"/>
    <property type="match status" value="1"/>
</dbReference>
<dbReference type="FunFam" id="3.40.50.720:FF:000003">
    <property type="entry name" value="S-(hydroxymethyl)glutathione dehydrogenase"/>
    <property type="match status" value="1"/>
</dbReference>
<dbReference type="Gene3D" id="3.90.180.10">
    <property type="entry name" value="Medium-chain alcohol dehydrogenases, catalytic domain"/>
    <property type="match status" value="1"/>
</dbReference>
<dbReference type="Gene3D" id="3.40.50.720">
    <property type="entry name" value="NAD(P)-binding Rossmann-like Domain"/>
    <property type="match status" value="1"/>
</dbReference>
<dbReference type="InterPro" id="IPR013149">
    <property type="entry name" value="ADH-like_C"/>
</dbReference>
<dbReference type="InterPro" id="IPR013154">
    <property type="entry name" value="ADH-like_N"/>
</dbReference>
<dbReference type="InterPro" id="IPR002328">
    <property type="entry name" value="ADH_Zn_CS"/>
</dbReference>
<dbReference type="InterPro" id="IPR011032">
    <property type="entry name" value="GroES-like_sf"/>
</dbReference>
<dbReference type="InterPro" id="IPR036291">
    <property type="entry name" value="NAD(P)-bd_dom_sf"/>
</dbReference>
<dbReference type="PANTHER" id="PTHR43880">
    <property type="entry name" value="ALCOHOL DEHYDROGENASE"/>
    <property type="match status" value="1"/>
</dbReference>
<dbReference type="PANTHER" id="PTHR43880:SF10">
    <property type="entry name" value="ALCOHOL DEHYDROGENASE-LIKE 2"/>
    <property type="match status" value="1"/>
</dbReference>
<dbReference type="Pfam" id="PF08240">
    <property type="entry name" value="ADH_N"/>
    <property type="match status" value="1"/>
</dbReference>
<dbReference type="Pfam" id="PF00107">
    <property type="entry name" value="ADH_zinc_N"/>
    <property type="match status" value="1"/>
</dbReference>
<dbReference type="SUPFAM" id="SSF50129">
    <property type="entry name" value="GroES-like"/>
    <property type="match status" value="2"/>
</dbReference>
<dbReference type="SUPFAM" id="SSF51735">
    <property type="entry name" value="NAD(P)-binding Rossmann-fold domains"/>
    <property type="match status" value="1"/>
</dbReference>
<dbReference type="PROSITE" id="PS00059">
    <property type="entry name" value="ADH_ZINC"/>
    <property type="match status" value="1"/>
</dbReference>
<name>ADHL2_ARATH</name>
<keyword id="KW-0963">Cytoplasm</keyword>
<keyword id="KW-0479">Metal-binding</keyword>
<keyword id="KW-0520">NAD</keyword>
<keyword id="KW-0560">Oxidoreductase</keyword>
<keyword id="KW-1185">Reference proteome</keyword>
<keyword id="KW-0862">Zinc</keyword>
<accession>Q9SK87</accession>
<comment type="catalytic activity">
    <reaction evidence="2">
        <text>a primary alcohol + NAD(+) = an aldehyde + NADH + H(+)</text>
        <dbReference type="Rhea" id="RHEA:10736"/>
        <dbReference type="ChEBI" id="CHEBI:15378"/>
        <dbReference type="ChEBI" id="CHEBI:15734"/>
        <dbReference type="ChEBI" id="CHEBI:17478"/>
        <dbReference type="ChEBI" id="CHEBI:57540"/>
        <dbReference type="ChEBI" id="CHEBI:57945"/>
        <dbReference type="EC" id="1.1.1.1"/>
    </reaction>
</comment>
<comment type="catalytic activity">
    <reaction evidence="2">
        <text>a secondary alcohol + NAD(+) = a ketone + NADH + H(+)</text>
        <dbReference type="Rhea" id="RHEA:10740"/>
        <dbReference type="ChEBI" id="CHEBI:15378"/>
        <dbReference type="ChEBI" id="CHEBI:17087"/>
        <dbReference type="ChEBI" id="CHEBI:35681"/>
        <dbReference type="ChEBI" id="CHEBI:57540"/>
        <dbReference type="ChEBI" id="CHEBI:57945"/>
        <dbReference type="EC" id="1.1.1.1"/>
    </reaction>
</comment>
<comment type="cofactor">
    <cofactor evidence="2">
        <name>Zn(2+)</name>
        <dbReference type="ChEBI" id="CHEBI:29105"/>
    </cofactor>
    <text evidence="2">Binds 2 Zn(2+) ions per subunit.</text>
</comment>
<comment type="subunit">
    <text evidence="2">Homodimer.</text>
</comment>
<comment type="subcellular location">
    <subcellularLocation>
        <location evidence="2">Cytoplasm</location>
    </subcellularLocation>
</comment>
<comment type="similarity">
    <text evidence="3">Belongs to the zinc-containing alcohol dehydrogenase family. Class-III subfamily.</text>
</comment>
<proteinExistence type="evidence at transcript level"/>
<gene>
    <name type="ordered locus">At1g22440</name>
    <name type="ORF">F12K8.21</name>
</gene>
<feature type="chain" id="PRO_0000299184" description="Alcohol dehydrogenase-like 2">
    <location>
        <begin position="1"/>
        <end position="386"/>
    </location>
</feature>
<feature type="binding site" evidence="2">
    <location>
        <position position="51"/>
    </location>
    <ligand>
        <name>Zn(2+)</name>
        <dbReference type="ChEBI" id="CHEBI:29105"/>
        <label>1</label>
        <note>catalytic</note>
    </ligand>
</feature>
<feature type="binding site" evidence="2">
    <location>
        <position position="53"/>
    </location>
    <ligand>
        <name>an alcohol</name>
        <dbReference type="ChEBI" id="CHEBI:30879"/>
    </ligand>
</feature>
<feature type="binding site" evidence="2">
    <location>
        <position position="53"/>
    </location>
    <ligand>
        <name>NAD(+)</name>
        <dbReference type="ChEBI" id="CHEBI:57540"/>
    </ligand>
</feature>
<feature type="binding site" evidence="2">
    <location>
        <position position="53"/>
    </location>
    <ligand>
        <name>Zn(2+)</name>
        <dbReference type="ChEBI" id="CHEBI:29105"/>
        <label>1</label>
        <note>catalytic</note>
    </ligand>
</feature>
<feature type="binding site" evidence="1">
    <location>
        <position position="74"/>
    </location>
    <ligand>
        <name>an alcohol</name>
        <dbReference type="ChEBI" id="CHEBI:30879"/>
    </ligand>
</feature>
<feature type="binding site" evidence="2">
    <location>
        <position position="74"/>
    </location>
    <ligand>
        <name>Zn(2+)</name>
        <dbReference type="ChEBI" id="CHEBI:29105"/>
        <label>1</label>
        <note>catalytic</note>
    </ligand>
</feature>
<feature type="binding site" evidence="2">
    <location>
        <position position="104"/>
    </location>
    <ligand>
        <name>Zn(2+)</name>
        <dbReference type="ChEBI" id="CHEBI:29105"/>
        <label>2</label>
    </ligand>
</feature>
<feature type="binding site" evidence="2">
    <location>
        <position position="107"/>
    </location>
    <ligand>
        <name>Zn(2+)</name>
        <dbReference type="ChEBI" id="CHEBI:29105"/>
        <label>2</label>
    </ligand>
</feature>
<feature type="binding site" evidence="2">
    <location>
        <position position="110"/>
    </location>
    <ligand>
        <name>Zn(2+)</name>
        <dbReference type="ChEBI" id="CHEBI:29105"/>
        <label>2</label>
    </ligand>
</feature>
<feature type="binding site" evidence="2">
    <location>
        <position position="118"/>
    </location>
    <ligand>
        <name>Zn(2+)</name>
        <dbReference type="ChEBI" id="CHEBI:29105"/>
        <label>2</label>
    </ligand>
</feature>
<feature type="binding site" evidence="2">
    <location>
        <position position="183"/>
    </location>
    <ligand>
        <name>Zn(2+)</name>
        <dbReference type="ChEBI" id="CHEBI:29105"/>
        <label>1</label>
        <note>catalytic</note>
    </ligand>
</feature>
<feature type="binding site" evidence="2">
    <location>
        <begin position="208"/>
        <end position="213"/>
    </location>
    <ligand>
        <name>NAD(+)</name>
        <dbReference type="ChEBI" id="CHEBI:57540"/>
    </ligand>
</feature>
<feature type="binding site" evidence="2">
    <location>
        <position position="232"/>
    </location>
    <ligand>
        <name>NAD(+)</name>
        <dbReference type="ChEBI" id="CHEBI:57540"/>
    </ligand>
</feature>
<feature type="binding site" evidence="2">
    <location>
        <position position="237"/>
    </location>
    <ligand>
        <name>NAD(+)</name>
        <dbReference type="ChEBI" id="CHEBI:57540"/>
    </ligand>
</feature>
<feature type="binding site" evidence="1">
    <location>
        <begin position="302"/>
        <end position="304"/>
    </location>
    <ligand>
        <name>NAD(+)</name>
        <dbReference type="ChEBI" id="CHEBI:57540"/>
    </ligand>
</feature>
<feature type="binding site" evidence="2">
    <location>
        <position position="329"/>
    </location>
    <ligand>
        <name>NAD(+)</name>
        <dbReference type="ChEBI" id="CHEBI:57540"/>
    </ligand>
</feature>
<feature type="binding site" evidence="2">
    <location>
        <position position="379"/>
    </location>
    <ligand>
        <name>NAD(+)</name>
        <dbReference type="ChEBI" id="CHEBI:57540"/>
    </ligand>
</feature>
<sequence>MDKASITEGKPIRCKAAILRKAGEPLVIEEIQVDPPQAYEVRIKILCTSLCHTDVTFWKLDSGPLARFPRILGHEAVGVVESIGEKVDGFKQGDVVLPVFHPQCEECKECISPKSNWCTKYTNDYLSNTRRYGMTSRFKDSRGEDIHHFIFVSSFTEYTVVDIAHLVKISPEIPVDIAALLSCSVATGLGAAWKVADVEEGSTVVIFGLGAVGLAVAEGVRLRGAAKIIGVDLNPAKFEIGKRFGITDFVNPALCGEKTISEVIREMTDVGADYSFECIGLASLMEEAFKSTRPGSGKTIVLGMEQKALPISLGSYDLLRGRTVCGTLFGGLKPKLDIPILVDRYLKKELNLEDLITHELSFEEINKAFHLLAEGNSIRCIIWMDK</sequence>
<organism>
    <name type="scientific">Arabidopsis thaliana</name>
    <name type="common">Mouse-ear cress</name>
    <dbReference type="NCBI Taxonomy" id="3702"/>
    <lineage>
        <taxon>Eukaryota</taxon>
        <taxon>Viridiplantae</taxon>
        <taxon>Streptophyta</taxon>
        <taxon>Embryophyta</taxon>
        <taxon>Tracheophyta</taxon>
        <taxon>Spermatophyta</taxon>
        <taxon>Magnoliopsida</taxon>
        <taxon>eudicotyledons</taxon>
        <taxon>Gunneridae</taxon>
        <taxon>Pentapetalae</taxon>
        <taxon>rosids</taxon>
        <taxon>malvids</taxon>
        <taxon>Brassicales</taxon>
        <taxon>Brassicaceae</taxon>
        <taxon>Camelineae</taxon>
        <taxon>Arabidopsis</taxon>
    </lineage>
</organism>
<protein>
    <recommendedName>
        <fullName>Alcohol dehydrogenase-like 2</fullName>
        <ecNumber evidence="2">1.1.1.1</ecNumber>
    </recommendedName>
</protein>